<gene>
    <name evidence="11" type="primary">smg1</name>
    <name evidence="2" type="synonym">atx</name>
</gene>
<proteinExistence type="evidence at transcript level"/>
<sequence length="3640" mass="405061">MSRKALGSRLSSAHKLQRNWNDWQPRSDSLSASQDGVKCSVSRDRGSEVLFEILPSDRPGTPPLHNDAFTATDALEEGGGYDADGGLSENAYGWKSLGQELRINDVTTDITTFQHGNRALATKDMRKSQDRPLAHSEESRLANLLRRASREDDRERRLATMKQMKEFIVHSENKVVLVKQLDSILSTLNDILNESSKLLQELRQEAAWCLGLLCAALSYEAERIFKWMFLKFSVSTKDEVKLLYLVAVHKALETAGEKKAFSAVMQLVMSNLQSILENLDTPELLCQSVKCILLVARCYPHIFSTNFRDTVDILVGWHIDHTQKHSLTQQVSGWLQSLEQFWVADLAFSTTLLGQFLEDMEAYAEDLSHVVSGESGDEDIPPPTVSLPKLAALLRVFSTVVHSIGERFNPIRGPPITEAYVTDVLNRVLACVTTAKQVFFSEAVLTAGNECVCVLLVSIDLGGQLIDAVISYGLDQLNCCQNCGPEYSLSVLTLLTLVVDQINTKLPASFVEKLLAPKSHLLELRFHREREVMAAAHGVYHAVLSLKNIPILEAAYKLVLGEMGCALNSLLSPLGLPDACPHIQHPAFSQLNFSPERAEFVLIFNLSALTTIGNTKNSLIGMWALSPTVFALLSQNLVIVHSDLAVHHPAVQYAVLYTLYSHCTRHDHFISSSLSSSSPSLFDGAVISTVTTATKRHFSTLLNLLGMLLSKDHLNPEARRLLLTWSLEVALMMKKSETYAPLFSLPSFLKFCKGLLANSLNEDTTICLQACNSLQVLSSSLTMELLQRCVDVCRVQLVHSAVRVRQAFGKLLRSVPMHVALSAHSHSEIKEISLAIRRHMSKVPSNTFHPQDFSDLIGFILYGTVHRGGKEPWLERLYHSCQRLEKKDSAMVPRALLKTEAVLWQWAVWEAAQFTVLSKLRTPLGRAQDTFQTIEGMIRSLAAHSLNTEQELSQWSGGESDEGHHTNQLRLALLLQFLENLEKLMYNAYEGCASALTAPPKGIRTFFYTNRQTCQDWLTRIRLALMRVGLLSGQPAVTVRHGFDLLTEIKNSSTQGPEMEVPVTMLVEALCELRCPEAIQGLAAWSLANTGKSMGWLSSVALQAEGKFEKAALEYQEQLCAVTGMDCSIKVFDRSLLKLTGTNTSSPKHTSSGEGRKTVLLKSSECSPEVLNFLANKACECYVALSDWESVQEWQASMMNLKKNSSSSSVNLKTDFNYIRSMSRFEEGDFTECRAQLELLPGDDYGLLNSTTKDKIDLKRLLPAVLSPDPSELQKAIEVQLLRSAVGAISATNHEQDQKVASSDTLVKYLKQTGRICLGPLRLSTLTLSDSLPTLSTLQLHCANSLENSLCNQHPEDCLIPLFSEALTTCKQQDVQPWLHALRYTTFQREFFQKLKGSSSPVDSHLMELCLTAVKFARKQGNIALATRLLSLCSKPAMSDTEGQDLVQSFRQLSLEGTVGEKWGPELEIEKAKVLFAAGQSVSAMEMLSSCALSYCHSGKCELAACRSVLTLCKWLLADWKDLTPQLKMVVKKNSGSTSLSTLSKNISGLLELPLEDQGMPHITTETTVSVGVGEPDFVLGQLYQLSTTQAPEVAKSWAALASWAYRWGRKVVDNASQGEGVPLLLGEKKEIEELLPAGTSDEDKETIFGILGQAMCRPAGIQDEDMALQNEEDDEDDMVDVIGRQLLGACPWLSDVEDTVTDGLIGVWRRVVDRIFSLYRVSCRAYFTFLKLNAGQVPIDEDDPKLLLNNQNSKQSSDDVIVMATLRLLRLLVKHAGELREGLEHGLASTPTAPWRGIIPQLFSRLNHPEAYIRQSICSLLCRVAQDSPHLILYPAIVGSISLGGEAQTAGNKLPSSLPTLLGNMQGEGLCGGESETGSGPTSQESSRGEEMVMYSSEDQAMMQDCYSKIVDKLSSANPTMVLQVQMLVGELRRVTLLWDELWLGVLQQQHMHVLRRIQQLEDEVKRVQNNNTLRKDEKVAIMREKHSALMKPVVFALDHVRSITAAPAETPHEEWFQETYGDAIHNALERLRSPLNPANPASSWVPFKQIMLSLQQRAQKRASYLLRLDEISPRLTAMANTEMALPGEVSATDAVTIQSVGNTITILPTKTKPKKLYFLGSDGRNYPYLFKGLEDLHLDERIMQFLSIVNTMFTKVNQQESPRFQARHYSVTPLGTRSGLIQWVDGATPLFGLYKRWQQREAVVQAQKAQDSFQQPQNLPMVPRPSELYYSKISPALKAVGLSLDVSRRDWPLSVMRDVLRELMEATPPNLLAKELWCSCTTPSEWWSVTQTYARSTAVMSMVGYIIGLGDRHLDNVLIDMTTGEVVHIDYNVCFEKGKSLRVPEKVPFRMTHNIETALGVTGVEGIFRLSCEQVVQIMRRGRETLLTLLEAFVYDPLVDWTAGGEVGFAGAVYGGGGQQAENKQSKREMERDITRSLFSSRVAEIKVNWFKNRDEMTGVLPQLEEAVDEYLNLQEQLTQVEKVQGKLLEELEFLEGADTRADHPIHSLEHRYSEHTQLQSRQRTVQDAIQGKLSDLDQWISQYQAAFASLEATQLASLLQEISSPIDLGPPSYVPATSFLQNAGQAHLISQCEALEAEVSALLQQRRSQLRGCLEHLHSYATVALLYPRAVLHRHRAHTWKQWMEELVCDMTVDHCQTIYHQYEMQFAPQPPPATCQFLSSIEMALQHHAAETNTRLLRQVERLKAEGASVPVCEEQLQEIERCIKVFLHEDAELGSFSLAGIIVSALCSLTRRNLVMEGAAASAGEQLVELTSRDGAWFLEELCSMSGNITCLVQLLQQCQLLSHDLDIPSPAETSQVVYLTNGVYTCLQELNTNFRQIIFPEALRCMLKGENTLETMLAELDALIDQCADGVSLQGLGEILMAHIRNASMGLEEDPDDHYLDVTRVLRAQYSELIQPRSMESSVQETPKMSAGQMLLVAFDGMFAQLETAFGLLIDKLNSMDVPAAWRKVDVIRESRATQAHFFDNVQTRQVLEEIFFLKRLQTIRDFFRLCGSFAQTLSGTCPTPTDDPPPSNGPVPIVKPLYRGSTVVSEDQMTRPIKAFTADFVRQMLMGLPTQALGLAICSSLSALGMDLIAQVEAKDFGAEGKVSLDDLCKKAVEQGVQAGRLSQLLLNRATVLASSYDTAWKKLDLVRRLEVSIEACKVSLQRNQLHIAMFQWQHEDILGARTQPMTVSPPPRSIILSNMKKKLYKLSQDDASIGSVQEKLASLEGSIEQRLKWAGGANPALAPVLQDFEATIAERRALVIKESQRANQVTFLCSTILNFEGLRTRTPEALNMDAALFELVKRCQATCSYAAQFNTSVSSLELQLLHRLSPAMDMSIGGPEWLVYAQNHLTQEMSSQRAMQEEREQQLESVTETLQLLVDSIKGTLSNHNRQLADVKHLLRAMAKDEENALAEGEEVTYDGSVRQFLSEYKAWQDNVQIVLFTVVQATGQPRSQEQIELLQEIPATLKELKVQSHSIYNGLVGFASPLVTERGSDCISPTSTVQTSFAAAVRCSGVKTQPDSMSQNARKALPRNFGTPADTPPSTLMINSKGLAPSPKRAVRDPKTGRAVQERNSYAVSVWKRVKAKLEGRDVDPNRRMSVTEQVDYVIKEATNVDNLAQLYEGWTAWV</sequence>
<evidence type="ECO:0000250" key="1">
    <source>
        <dbReference type="UniProtKB" id="Q8BKX6"/>
    </source>
</evidence>
<evidence type="ECO:0000250" key="2">
    <source>
        <dbReference type="UniProtKB" id="Q96Q15"/>
    </source>
</evidence>
<evidence type="ECO:0000255" key="3">
    <source>
        <dbReference type="PROSITE-ProRule" id="PRU00269"/>
    </source>
</evidence>
<evidence type="ECO:0000255" key="4">
    <source>
        <dbReference type="PROSITE-ProRule" id="PRU00534"/>
    </source>
</evidence>
<evidence type="ECO:0000255" key="5">
    <source>
        <dbReference type="PROSITE-ProRule" id="PRU00535"/>
    </source>
</evidence>
<evidence type="ECO:0000256" key="6">
    <source>
        <dbReference type="SAM" id="MobiDB-lite"/>
    </source>
</evidence>
<evidence type="ECO:0000269" key="7">
    <source>
    </source>
</evidence>
<evidence type="ECO:0000305" key="8"/>
<evidence type="ECO:0000312" key="9">
    <source>
        <dbReference type="EMBL" id="CAX18774.1"/>
    </source>
</evidence>
<evidence type="ECO:0000312" key="10">
    <source>
        <dbReference type="Proteomes" id="UP000000437"/>
    </source>
</evidence>
<evidence type="ECO:0000312" key="11">
    <source>
        <dbReference type="ZFIN" id="ZDB-GENE-061013-767"/>
    </source>
</evidence>
<organism evidence="10">
    <name type="scientific">Danio rerio</name>
    <name type="common">Zebrafish</name>
    <name type="synonym">Brachydanio rerio</name>
    <dbReference type="NCBI Taxonomy" id="7955"/>
    <lineage>
        <taxon>Eukaryota</taxon>
        <taxon>Metazoa</taxon>
        <taxon>Chordata</taxon>
        <taxon>Craniata</taxon>
        <taxon>Vertebrata</taxon>
        <taxon>Euteleostomi</taxon>
        <taxon>Actinopterygii</taxon>
        <taxon>Neopterygii</taxon>
        <taxon>Teleostei</taxon>
        <taxon>Ostariophysi</taxon>
        <taxon>Cypriniformes</taxon>
        <taxon>Danionidae</taxon>
        <taxon>Danioninae</taxon>
        <taxon>Danio</taxon>
    </lineage>
</organism>
<keyword id="KW-0025">Alternative splicing</keyword>
<keyword id="KW-0067">ATP-binding</keyword>
<keyword id="KW-0963">Cytoplasm</keyword>
<keyword id="KW-0418">Kinase</keyword>
<keyword id="KW-0464">Manganese</keyword>
<keyword id="KW-0866">Nonsense-mediated mRNA decay</keyword>
<keyword id="KW-0547">Nucleotide-binding</keyword>
<keyword id="KW-0539">Nucleus</keyword>
<keyword id="KW-1185">Reference proteome</keyword>
<keyword id="KW-0677">Repeat</keyword>
<keyword id="KW-0723">Serine/threonine-protein kinase</keyword>
<keyword id="KW-0808">Transferase</keyword>
<accession>C5J7W8</accession>
<accession>F1QLT4</accession>
<accession>F6NHQ0</accession>
<protein>
    <recommendedName>
        <fullName evidence="2">Serine/threonine-protein kinase SMG1</fullName>
        <shortName>smg-1</shortName>
        <ecNumber evidence="2">2.7.11.1</ecNumber>
    </recommendedName>
    <alternativeName>
        <fullName evidence="11">Nonsense-mediated mRNA decay-associated PI3K-related kinase SMG1</fullName>
    </alternativeName>
</protein>
<feature type="chain" id="PRO_0000454181" description="Serine/threonine-protein kinase SMG1">
    <location>
        <begin position="1"/>
        <end position="3640"/>
    </location>
</feature>
<feature type="domain" description="FAT" evidence="4">
    <location>
        <begin position="1495"/>
        <end position="1843"/>
    </location>
</feature>
<feature type="repeat" description="HEAT" evidence="1">
    <location>
        <begin position="1794"/>
        <end position="1829"/>
    </location>
</feature>
<feature type="domain" description="PI3K/PI4K catalytic" evidence="3">
    <location>
        <begin position="2102"/>
        <end position="2441"/>
    </location>
</feature>
<feature type="domain" description="FATC" evidence="5">
    <location>
        <begin position="3608"/>
        <end position="3640"/>
    </location>
</feature>
<feature type="region of interest" description="Disordered" evidence="6">
    <location>
        <begin position="21"/>
        <end position="41"/>
    </location>
</feature>
<feature type="region of interest" description="Disordered" evidence="6">
    <location>
        <begin position="1870"/>
        <end position="1890"/>
    </location>
</feature>
<feature type="region of interest" description="G-loop" evidence="3">
    <location>
        <begin position="2108"/>
        <end position="2114"/>
    </location>
</feature>
<feature type="region of interest" description="Catalytic loop" evidence="3">
    <location>
        <begin position="2310"/>
        <end position="2318"/>
    </location>
</feature>
<feature type="region of interest" description="Activation loop" evidence="3">
    <location>
        <begin position="2330"/>
        <end position="2354"/>
    </location>
</feature>
<feature type="compositionally biased region" description="Polar residues" evidence="6">
    <location>
        <begin position="21"/>
        <end position="34"/>
    </location>
</feature>
<feature type="compositionally biased region" description="Low complexity" evidence="6">
    <location>
        <begin position="1874"/>
        <end position="1887"/>
    </location>
</feature>
<feature type="splice variant" id="VSP_061249" description="In isoform 2.">
    <location>
        <begin position="1397"/>
        <end position="1401"/>
    </location>
</feature>
<feature type="sequence conflict" description="In Ref. 1." evidence="8" ref="1">
    <original>S</original>
    <variation>A</variation>
    <location>
        <position position="1221"/>
    </location>
</feature>
<comment type="function">
    <text evidence="2">Serine/threonine protein kinase involved in both mRNA surveillance and genotoxic stress response pathways. Recognizes the substrate consensus sequence [ST]-Q. Plays a central role in nonsense-mediated decay (NMD) of mRNAs containing premature stop codons by phosphorylating UPF1/RENT1.</text>
</comment>
<comment type="catalytic activity">
    <reaction evidence="2">
        <text>L-seryl-[protein] + ATP = O-phospho-L-seryl-[protein] + ADP + H(+)</text>
        <dbReference type="Rhea" id="RHEA:17989"/>
        <dbReference type="Rhea" id="RHEA-COMP:9863"/>
        <dbReference type="Rhea" id="RHEA-COMP:11604"/>
        <dbReference type="ChEBI" id="CHEBI:15378"/>
        <dbReference type="ChEBI" id="CHEBI:29999"/>
        <dbReference type="ChEBI" id="CHEBI:30616"/>
        <dbReference type="ChEBI" id="CHEBI:83421"/>
        <dbReference type="ChEBI" id="CHEBI:456216"/>
        <dbReference type="EC" id="2.7.11.1"/>
    </reaction>
</comment>
<comment type="catalytic activity">
    <reaction evidence="2">
        <text>L-threonyl-[protein] + ATP = O-phospho-L-threonyl-[protein] + ADP + H(+)</text>
        <dbReference type="Rhea" id="RHEA:46608"/>
        <dbReference type="Rhea" id="RHEA-COMP:11060"/>
        <dbReference type="Rhea" id="RHEA-COMP:11605"/>
        <dbReference type="ChEBI" id="CHEBI:15378"/>
        <dbReference type="ChEBI" id="CHEBI:30013"/>
        <dbReference type="ChEBI" id="CHEBI:30616"/>
        <dbReference type="ChEBI" id="CHEBI:61977"/>
        <dbReference type="ChEBI" id="CHEBI:456216"/>
        <dbReference type="EC" id="2.7.11.1"/>
    </reaction>
</comment>
<comment type="cofactor">
    <cofactor evidence="2">
        <name>Mn(2+)</name>
        <dbReference type="ChEBI" id="CHEBI:29035"/>
    </cofactor>
</comment>
<comment type="subcellular location">
    <subcellularLocation>
        <location evidence="2">Nucleus</location>
    </subcellularLocation>
    <subcellularLocation>
        <location evidence="2">Cytoplasm</location>
    </subcellularLocation>
</comment>
<comment type="alternative products">
    <event type="alternative splicing"/>
    <isoform>
        <id>C5J7W8-1</id>
        <name>1</name>
        <sequence type="displayed"/>
    </isoform>
    <isoform>
        <id>C5J7W8-2</id>
        <name>2</name>
        <sequence type="described" ref="VSP_061249"/>
    </isoform>
</comment>
<comment type="developmental stage">
    <text evidence="7">Expressed during early cleavage, gastrulation and at 1 day post-fertilization.</text>
</comment>
<comment type="PTM">
    <text evidence="2">Autophosphorylated.</text>
</comment>
<comment type="disruption phenotype">
    <text evidence="7">Morpholino knockdown results in reduced slc24a5 expression in wild-type embryos however expression is still detectable in the body and retinal pigment epithelium (PubMed:19414594). In 50% of the embryos expression of slc24a5 is restricted to the retina (PubMed:19414594).</text>
</comment>
<comment type="similarity">
    <text evidence="2">Belongs to the PI3/PI4-kinase family.</text>
</comment>
<dbReference type="EC" id="2.7.11.1" evidence="2"/>
<dbReference type="EMBL" id="FM986821">
    <property type="protein sequence ID" value="CAX18774.1"/>
    <property type="molecule type" value="mRNA"/>
</dbReference>
<dbReference type="EMBL" id="BX004999">
    <property type="status" value="NOT_ANNOTATED_CDS"/>
    <property type="molecule type" value="Genomic_DNA"/>
</dbReference>
<dbReference type="RefSeq" id="NP_001073513.2">
    <molecule id="C5J7W8-1"/>
    <property type="nucleotide sequence ID" value="NM_001080044.2"/>
</dbReference>
<dbReference type="SMR" id="C5J7W8"/>
<dbReference type="FunCoup" id="C5J7W8">
    <property type="interactions" value="1445"/>
</dbReference>
<dbReference type="STRING" id="7955.ENSDARP00000071267"/>
<dbReference type="PaxDb" id="7955-ENSDARP00000071267"/>
<dbReference type="PeptideAtlas" id="C5J7W8"/>
<dbReference type="Ensembl" id="ENSDART00000076796">
    <molecule id="C5J7W8-1"/>
    <property type="protein sequence ID" value="ENSDARP00000071267"/>
    <property type="gene ID" value="ENSDARG00000054570"/>
</dbReference>
<dbReference type="GeneID" id="569810"/>
<dbReference type="KEGG" id="dre:569810"/>
<dbReference type="AGR" id="ZFIN:ZDB-GENE-061013-767"/>
<dbReference type="CTD" id="23049"/>
<dbReference type="ZFIN" id="ZDB-GENE-061013-767">
    <property type="gene designation" value="smg1"/>
</dbReference>
<dbReference type="eggNOG" id="KOG0891">
    <property type="taxonomic scope" value="Eukaryota"/>
</dbReference>
<dbReference type="HOGENOM" id="CLU_000316_0_0_1"/>
<dbReference type="InParanoid" id="C5J7W8"/>
<dbReference type="OMA" id="AFECHFT"/>
<dbReference type="OrthoDB" id="10065496at2759"/>
<dbReference type="PhylomeDB" id="C5J7W8"/>
<dbReference type="TreeFam" id="TF352560"/>
<dbReference type="Reactome" id="R-DRE-975957">
    <property type="pathway name" value="Nonsense Mediated Decay (NMD) enhanced by the Exon Junction Complex (EJC)"/>
</dbReference>
<dbReference type="PRO" id="PR:C5J7W8"/>
<dbReference type="Proteomes" id="UP000000437">
    <property type="component" value="Alternate scaffold 3"/>
</dbReference>
<dbReference type="Proteomes" id="UP000000437">
    <property type="component" value="Chromosome 3"/>
</dbReference>
<dbReference type="Bgee" id="ENSDARG00000054570">
    <property type="expression patterns" value="Expressed in tail and 21 other cell types or tissues"/>
</dbReference>
<dbReference type="ExpressionAtlas" id="C5J7W8">
    <property type="expression patterns" value="baseline and differential"/>
</dbReference>
<dbReference type="GO" id="GO:0005737">
    <property type="term" value="C:cytoplasm"/>
    <property type="evidence" value="ECO:0007669"/>
    <property type="project" value="UniProtKB-SubCell"/>
</dbReference>
<dbReference type="GO" id="GO:0005634">
    <property type="term" value="C:nucleus"/>
    <property type="evidence" value="ECO:0000318"/>
    <property type="project" value="GO_Central"/>
</dbReference>
<dbReference type="GO" id="GO:0005524">
    <property type="term" value="F:ATP binding"/>
    <property type="evidence" value="ECO:0007669"/>
    <property type="project" value="UniProtKB-KW"/>
</dbReference>
<dbReference type="GO" id="GO:0004674">
    <property type="term" value="F:protein serine/threonine kinase activity"/>
    <property type="evidence" value="ECO:0000318"/>
    <property type="project" value="GO_Central"/>
</dbReference>
<dbReference type="GO" id="GO:0000184">
    <property type="term" value="P:nuclear-transcribed mRNA catabolic process, nonsense-mediated decay"/>
    <property type="evidence" value="ECO:0000318"/>
    <property type="project" value="GO_Central"/>
</dbReference>
<dbReference type="CDD" id="cd05170">
    <property type="entry name" value="PIKKc_SMG1"/>
    <property type="match status" value="1"/>
</dbReference>
<dbReference type="FunFam" id="1.25.10.10:FF:000136">
    <property type="entry name" value="serine/threonine-protein kinase SMG1 isoform X1"/>
    <property type="match status" value="1"/>
</dbReference>
<dbReference type="FunFam" id="3.30.1010.10:FF:000010">
    <property type="entry name" value="serine/threonine-protein kinase SMG1 isoform X1"/>
    <property type="match status" value="1"/>
</dbReference>
<dbReference type="FunFam" id="1.10.1070.11:FF:000008">
    <property type="entry name" value="serine/threonine-protein kinase SMG1 isoform X2"/>
    <property type="match status" value="1"/>
</dbReference>
<dbReference type="Gene3D" id="1.10.1070.11">
    <property type="entry name" value="Phosphatidylinositol 3-/4-kinase, catalytic domain"/>
    <property type="match status" value="1"/>
</dbReference>
<dbReference type="Gene3D" id="3.30.1010.10">
    <property type="entry name" value="Phosphatidylinositol 3-kinase Catalytic Subunit, Chain A, domain 4"/>
    <property type="match status" value="1"/>
</dbReference>
<dbReference type="InterPro" id="IPR016024">
    <property type="entry name" value="ARM-type_fold"/>
</dbReference>
<dbReference type="InterPro" id="IPR050517">
    <property type="entry name" value="DDR_Repair_Kinase"/>
</dbReference>
<dbReference type="InterPro" id="IPR003152">
    <property type="entry name" value="FATC_dom"/>
</dbReference>
<dbReference type="InterPro" id="IPR011009">
    <property type="entry name" value="Kinase-like_dom_sf"/>
</dbReference>
<dbReference type="InterPro" id="IPR000403">
    <property type="entry name" value="PI3/4_kinase_cat_dom"/>
</dbReference>
<dbReference type="InterPro" id="IPR036940">
    <property type="entry name" value="PI3/4_kinase_cat_sf"/>
</dbReference>
<dbReference type="InterPro" id="IPR018936">
    <property type="entry name" value="PI3/4_kinase_CS"/>
</dbReference>
<dbReference type="InterPro" id="IPR014009">
    <property type="entry name" value="PIK_FAT"/>
</dbReference>
<dbReference type="InterPro" id="IPR031559">
    <property type="entry name" value="SMG1"/>
</dbReference>
<dbReference type="InterPro" id="IPR035175">
    <property type="entry name" value="SMG1_N"/>
</dbReference>
<dbReference type="InterPro" id="IPR039414">
    <property type="entry name" value="SMG1_PIKKc"/>
</dbReference>
<dbReference type="PANTHER" id="PTHR11139">
    <property type="entry name" value="ATAXIA TELANGIECTASIA MUTATED ATM -RELATED"/>
    <property type="match status" value="1"/>
</dbReference>
<dbReference type="PANTHER" id="PTHR11139:SF72">
    <property type="entry name" value="SERINE-PROTEIN KINASE ATM"/>
    <property type="match status" value="1"/>
</dbReference>
<dbReference type="Pfam" id="PF02260">
    <property type="entry name" value="FATC"/>
    <property type="match status" value="1"/>
</dbReference>
<dbReference type="Pfam" id="PF00454">
    <property type="entry name" value="PI3_PI4_kinase"/>
    <property type="match status" value="1"/>
</dbReference>
<dbReference type="Pfam" id="PF15785">
    <property type="entry name" value="SMG1"/>
    <property type="match status" value="1"/>
</dbReference>
<dbReference type="Pfam" id="PF17229">
    <property type="entry name" value="SMG1_N"/>
    <property type="match status" value="1"/>
</dbReference>
<dbReference type="SMART" id="SM01343">
    <property type="entry name" value="FATC"/>
    <property type="match status" value="1"/>
</dbReference>
<dbReference type="SMART" id="SM00146">
    <property type="entry name" value="PI3Kc"/>
    <property type="match status" value="1"/>
</dbReference>
<dbReference type="SMART" id="SM01345">
    <property type="entry name" value="Rapamycin_bind"/>
    <property type="match status" value="1"/>
</dbReference>
<dbReference type="SUPFAM" id="SSF48371">
    <property type="entry name" value="ARM repeat"/>
    <property type="match status" value="1"/>
</dbReference>
<dbReference type="SUPFAM" id="SSF56112">
    <property type="entry name" value="Protein kinase-like (PK-like)"/>
    <property type="match status" value="1"/>
</dbReference>
<dbReference type="PROSITE" id="PS51189">
    <property type="entry name" value="FAT"/>
    <property type="match status" value="1"/>
</dbReference>
<dbReference type="PROSITE" id="PS51190">
    <property type="entry name" value="FATC"/>
    <property type="match status" value="1"/>
</dbReference>
<dbReference type="PROSITE" id="PS00916">
    <property type="entry name" value="PI3_4_KINASE_2"/>
    <property type="match status" value="1"/>
</dbReference>
<dbReference type="PROSITE" id="PS50290">
    <property type="entry name" value="PI3_4_KINASE_3"/>
    <property type="match status" value="1"/>
</dbReference>
<name>SMG1_DANRE</name>
<reference evidence="9" key="1">
    <citation type="journal article" date="2009" name="Mol. Cell. Biol.">
        <title>Nonsense-mediated mRNA decay effectors are essential for zebrafish embryonic development and survival.</title>
        <authorList>
            <person name="Wittkopp N."/>
            <person name="Huntzinger E."/>
            <person name="Weiler C."/>
            <person name="Sauliere J."/>
            <person name="Schmidt S."/>
            <person name="Sonawane M."/>
            <person name="Izaurralde E."/>
        </authorList>
    </citation>
    <scope>NUCLEOTIDE SEQUENCE [MRNA]</scope>
    <scope>DEVELOPMENTAL STAGE</scope>
    <scope>DISRUPTION PHENOTYPE</scope>
</reference>
<reference evidence="10" key="2">
    <citation type="journal article" date="2013" name="Nature">
        <title>The zebrafish reference genome sequence and its relationship to the human genome.</title>
        <authorList>
            <person name="Howe K."/>
            <person name="Clark M.D."/>
            <person name="Torroja C.F."/>
            <person name="Torrance J."/>
            <person name="Berthelot C."/>
            <person name="Muffato M."/>
            <person name="Collins J.E."/>
            <person name="Humphray S."/>
            <person name="McLaren K."/>
            <person name="Matthews L."/>
            <person name="McLaren S."/>
            <person name="Sealy I."/>
            <person name="Caccamo M."/>
            <person name="Churcher C."/>
            <person name="Scott C."/>
            <person name="Barrett J.C."/>
            <person name="Koch R."/>
            <person name="Rauch G.J."/>
            <person name="White S."/>
            <person name="Chow W."/>
            <person name="Kilian B."/>
            <person name="Quintais L.T."/>
            <person name="Guerra-Assuncao J.A."/>
            <person name="Zhou Y."/>
            <person name="Gu Y."/>
            <person name="Yen J."/>
            <person name="Vogel J.H."/>
            <person name="Eyre T."/>
            <person name="Redmond S."/>
            <person name="Banerjee R."/>
            <person name="Chi J."/>
            <person name="Fu B."/>
            <person name="Langley E."/>
            <person name="Maguire S.F."/>
            <person name="Laird G.K."/>
            <person name="Lloyd D."/>
            <person name="Kenyon E."/>
            <person name="Donaldson S."/>
            <person name="Sehra H."/>
            <person name="Almeida-King J."/>
            <person name="Loveland J."/>
            <person name="Trevanion S."/>
            <person name="Jones M."/>
            <person name="Quail M."/>
            <person name="Willey D."/>
            <person name="Hunt A."/>
            <person name="Burton J."/>
            <person name="Sims S."/>
            <person name="McLay K."/>
            <person name="Plumb B."/>
            <person name="Davis J."/>
            <person name="Clee C."/>
            <person name="Oliver K."/>
            <person name="Clark R."/>
            <person name="Riddle C."/>
            <person name="Elliot D."/>
            <person name="Threadgold G."/>
            <person name="Harden G."/>
            <person name="Ware D."/>
            <person name="Begum S."/>
            <person name="Mortimore B."/>
            <person name="Kerry G."/>
            <person name="Heath P."/>
            <person name="Phillimore B."/>
            <person name="Tracey A."/>
            <person name="Corby N."/>
            <person name="Dunn M."/>
            <person name="Johnson C."/>
            <person name="Wood J."/>
            <person name="Clark S."/>
            <person name="Pelan S."/>
            <person name="Griffiths G."/>
            <person name="Smith M."/>
            <person name="Glithero R."/>
            <person name="Howden P."/>
            <person name="Barker N."/>
            <person name="Lloyd C."/>
            <person name="Stevens C."/>
            <person name="Harley J."/>
            <person name="Holt K."/>
            <person name="Panagiotidis G."/>
            <person name="Lovell J."/>
            <person name="Beasley H."/>
            <person name="Henderson C."/>
            <person name="Gordon D."/>
            <person name="Auger K."/>
            <person name="Wright D."/>
            <person name="Collins J."/>
            <person name="Raisen C."/>
            <person name="Dyer L."/>
            <person name="Leung K."/>
            <person name="Robertson L."/>
            <person name="Ambridge K."/>
            <person name="Leongamornlert D."/>
            <person name="McGuire S."/>
            <person name="Gilderthorp R."/>
            <person name="Griffiths C."/>
            <person name="Manthravadi D."/>
            <person name="Nichol S."/>
            <person name="Barker G."/>
            <person name="Whitehead S."/>
            <person name="Kay M."/>
            <person name="Brown J."/>
            <person name="Murnane C."/>
            <person name="Gray E."/>
            <person name="Humphries M."/>
            <person name="Sycamore N."/>
            <person name="Barker D."/>
            <person name="Saunders D."/>
            <person name="Wallis J."/>
            <person name="Babbage A."/>
            <person name="Hammond S."/>
            <person name="Mashreghi-Mohammadi M."/>
            <person name="Barr L."/>
            <person name="Martin S."/>
            <person name="Wray P."/>
            <person name="Ellington A."/>
            <person name="Matthews N."/>
            <person name="Ellwood M."/>
            <person name="Woodmansey R."/>
            <person name="Clark G."/>
            <person name="Cooper J."/>
            <person name="Tromans A."/>
            <person name="Grafham D."/>
            <person name="Skuce C."/>
            <person name="Pandian R."/>
            <person name="Andrews R."/>
            <person name="Harrison E."/>
            <person name="Kimberley A."/>
            <person name="Garnett J."/>
            <person name="Fosker N."/>
            <person name="Hall R."/>
            <person name="Garner P."/>
            <person name="Kelly D."/>
            <person name="Bird C."/>
            <person name="Palmer S."/>
            <person name="Gehring I."/>
            <person name="Berger A."/>
            <person name="Dooley C.M."/>
            <person name="Ersan-Urun Z."/>
            <person name="Eser C."/>
            <person name="Geiger H."/>
            <person name="Geisler M."/>
            <person name="Karotki L."/>
            <person name="Kirn A."/>
            <person name="Konantz J."/>
            <person name="Konantz M."/>
            <person name="Oberlander M."/>
            <person name="Rudolph-Geiger S."/>
            <person name="Teucke M."/>
            <person name="Lanz C."/>
            <person name="Raddatz G."/>
            <person name="Osoegawa K."/>
            <person name="Zhu B."/>
            <person name="Rapp A."/>
            <person name="Widaa S."/>
            <person name="Langford C."/>
            <person name="Yang F."/>
            <person name="Schuster S.C."/>
            <person name="Carter N.P."/>
            <person name="Harrow J."/>
            <person name="Ning Z."/>
            <person name="Herrero J."/>
            <person name="Searle S.M."/>
            <person name="Enright A."/>
            <person name="Geisler R."/>
            <person name="Plasterk R.H."/>
            <person name="Lee C."/>
            <person name="Westerfield M."/>
            <person name="de Jong P.J."/>
            <person name="Zon L.I."/>
            <person name="Postlethwait J.H."/>
            <person name="Nusslein-Volhard C."/>
            <person name="Hubbard T.J."/>
            <person name="Roest Crollius H."/>
            <person name="Rogers J."/>
            <person name="Stemple D.L."/>
        </authorList>
    </citation>
    <scope>NUCLEOTIDE SEQUENCE [LARGE SCALE GENOMIC DNA]</scope>
    <source>
        <strain evidence="10">Tuebingen</strain>
    </source>
</reference>